<comment type="function">
    <text evidence="1">Catalyzes the ATP-dependent phosphorylation of N-acetyl-L-glutamate.</text>
</comment>
<comment type="catalytic activity">
    <reaction evidence="1">
        <text>N-acetyl-L-glutamate + ATP = N-acetyl-L-glutamyl 5-phosphate + ADP</text>
        <dbReference type="Rhea" id="RHEA:14629"/>
        <dbReference type="ChEBI" id="CHEBI:30616"/>
        <dbReference type="ChEBI" id="CHEBI:44337"/>
        <dbReference type="ChEBI" id="CHEBI:57936"/>
        <dbReference type="ChEBI" id="CHEBI:456216"/>
        <dbReference type="EC" id="2.7.2.8"/>
    </reaction>
</comment>
<comment type="pathway">
    <text evidence="1">Amino-acid biosynthesis; L-arginine biosynthesis; N(2)-acetyl-L-ornithine from L-glutamate: step 2/4.</text>
</comment>
<comment type="subcellular location">
    <subcellularLocation>
        <location evidence="1">Cytoplasm</location>
    </subcellularLocation>
</comment>
<comment type="similarity">
    <text evidence="1">Belongs to the acetylglutamate kinase family. ArgB subfamily.</text>
</comment>
<organism>
    <name type="scientific">Bacillus cereus (strain 03BB102)</name>
    <dbReference type="NCBI Taxonomy" id="572264"/>
    <lineage>
        <taxon>Bacteria</taxon>
        <taxon>Bacillati</taxon>
        <taxon>Bacillota</taxon>
        <taxon>Bacilli</taxon>
        <taxon>Bacillales</taxon>
        <taxon>Bacillaceae</taxon>
        <taxon>Bacillus</taxon>
        <taxon>Bacillus cereus group</taxon>
    </lineage>
</organism>
<reference key="1">
    <citation type="submission" date="2009-02" db="EMBL/GenBank/DDBJ databases">
        <title>Genome sequence of Bacillus cereus 03BB102.</title>
        <authorList>
            <person name="Dodson R.J."/>
            <person name="Jackson P."/>
            <person name="Munk A.C."/>
            <person name="Brettin T."/>
            <person name="Bruce D."/>
            <person name="Detter C."/>
            <person name="Tapia R."/>
            <person name="Han C."/>
            <person name="Sutton G."/>
            <person name="Sims D."/>
        </authorList>
    </citation>
    <scope>NUCLEOTIDE SEQUENCE [LARGE SCALE GENOMIC DNA]</scope>
    <source>
        <strain>03BB102</strain>
    </source>
</reference>
<keyword id="KW-0028">Amino-acid biosynthesis</keyword>
<keyword id="KW-0055">Arginine biosynthesis</keyword>
<keyword id="KW-0067">ATP-binding</keyword>
<keyword id="KW-0963">Cytoplasm</keyword>
<keyword id="KW-0418">Kinase</keyword>
<keyword id="KW-0547">Nucleotide-binding</keyword>
<keyword id="KW-0808">Transferase</keyword>
<dbReference type="EC" id="2.7.2.8" evidence="1"/>
<dbReference type="EMBL" id="CP001407">
    <property type="protein sequence ID" value="ACO29102.1"/>
    <property type="molecule type" value="Genomic_DNA"/>
</dbReference>
<dbReference type="RefSeq" id="WP_001000900.1">
    <property type="nucleotide sequence ID" value="NC_012472.1"/>
</dbReference>
<dbReference type="SMR" id="C1ER04"/>
<dbReference type="KEGG" id="bcx:BCA_4243"/>
<dbReference type="PATRIC" id="fig|572264.18.peg.4194"/>
<dbReference type="UniPathway" id="UPA00068">
    <property type="reaction ID" value="UER00107"/>
</dbReference>
<dbReference type="Proteomes" id="UP000002210">
    <property type="component" value="Chromosome"/>
</dbReference>
<dbReference type="GO" id="GO:0005737">
    <property type="term" value="C:cytoplasm"/>
    <property type="evidence" value="ECO:0007669"/>
    <property type="project" value="UniProtKB-SubCell"/>
</dbReference>
<dbReference type="GO" id="GO:0003991">
    <property type="term" value="F:acetylglutamate kinase activity"/>
    <property type="evidence" value="ECO:0007669"/>
    <property type="project" value="UniProtKB-UniRule"/>
</dbReference>
<dbReference type="GO" id="GO:0005524">
    <property type="term" value="F:ATP binding"/>
    <property type="evidence" value="ECO:0007669"/>
    <property type="project" value="UniProtKB-UniRule"/>
</dbReference>
<dbReference type="GO" id="GO:0042450">
    <property type="term" value="P:arginine biosynthetic process via ornithine"/>
    <property type="evidence" value="ECO:0007669"/>
    <property type="project" value="UniProtKB-UniRule"/>
</dbReference>
<dbReference type="GO" id="GO:0006526">
    <property type="term" value="P:L-arginine biosynthetic process"/>
    <property type="evidence" value="ECO:0007669"/>
    <property type="project" value="UniProtKB-UniPathway"/>
</dbReference>
<dbReference type="CDD" id="cd04238">
    <property type="entry name" value="AAK_NAGK-like"/>
    <property type="match status" value="1"/>
</dbReference>
<dbReference type="Gene3D" id="3.40.1160.10">
    <property type="entry name" value="Acetylglutamate kinase-like"/>
    <property type="match status" value="1"/>
</dbReference>
<dbReference type="HAMAP" id="MF_00082">
    <property type="entry name" value="ArgB"/>
    <property type="match status" value="1"/>
</dbReference>
<dbReference type="InterPro" id="IPR036393">
    <property type="entry name" value="AceGlu_kinase-like_sf"/>
</dbReference>
<dbReference type="InterPro" id="IPR004662">
    <property type="entry name" value="AcgluKinase_fam"/>
</dbReference>
<dbReference type="InterPro" id="IPR037528">
    <property type="entry name" value="ArgB"/>
</dbReference>
<dbReference type="InterPro" id="IPR001048">
    <property type="entry name" value="Asp/Glu/Uridylate_kinase"/>
</dbReference>
<dbReference type="NCBIfam" id="TIGR00761">
    <property type="entry name" value="argB"/>
    <property type="match status" value="1"/>
</dbReference>
<dbReference type="PANTHER" id="PTHR23342">
    <property type="entry name" value="N-ACETYLGLUTAMATE SYNTHASE"/>
    <property type="match status" value="1"/>
</dbReference>
<dbReference type="PANTHER" id="PTHR23342:SF0">
    <property type="entry name" value="N-ACETYLGLUTAMATE SYNTHASE, MITOCHONDRIAL"/>
    <property type="match status" value="1"/>
</dbReference>
<dbReference type="Pfam" id="PF00696">
    <property type="entry name" value="AA_kinase"/>
    <property type="match status" value="1"/>
</dbReference>
<dbReference type="PIRSF" id="PIRSF000728">
    <property type="entry name" value="NAGK"/>
    <property type="match status" value="1"/>
</dbReference>
<dbReference type="SUPFAM" id="SSF53633">
    <property type="entry name" value="Carbamate kinase-like"/>
    <property type="match status" value="1"/>
</dbReference>
<feature type="chain" id="PRO_1000118335" description="Acetylglutamate kinase">
    <location>
        <begin position="1"/>
        <end position="255"/>
    </location>
</feature>
<feature type="binding site" evidence="1">
    <location>
        <begin position="40"/>
        <end position="41"/>
    </location>
    <ligand>
        <name>substrate</name>
    </ligand>
</feature>
<feature type="binding site" evidence="1">
    <location>
        <position position="62"/>
    </location>
    <ligand>
        <name>substrate</name>
    </ligand>
</feature>
<feature type="binding site" evidence="1">
    <location>
        <position position="153"/>
    </location>
    <ligand>
        <name>substrate</name>
    </ligand>
</feature>
<feature type="site" description="Transition state stabilizer" evidence="1">
    <location>
        <position position="8"/>
    </location>
</feature>
<feature type="site" description="Transition state stabilizer" evidence="1">
    <location>
        <position position="212"/>
    </location>
</feature>
<name>ARGB_BACC3</name>
<sequence>MNDYIVVKCGGSMLDQLNDVFFDCIKKLQQQYKVVIVHGGGPEIDAKLKDCNINVEKRDGLRVTPKEVMDVVQMVLCGSTNKKLVMNLQKHNLLAVGCSGCDGNLLQVQPVSGEIGYVGEVSYVETALLKGLINMNYIPVIAPVGINDNEIYNINADTAAAGIAAALSAKELILITDVDGILHEGKLVKKTDESEIATFIEKGVITGGMIPKVQAALASLKMGVQKISIVNGTKDFTEDTGGCIGTTVTRGVSIV</sequence>
<accession>C1ER04</accession>
<evidence type="ECO:0000255" key="1">
    <source>
        <dbReference type="HAMAP-Rule" id="MF_00082"/>
    </source>
</evidence>
<proteinExistence type="inferred from homology"/>
<protein>
    <recommendedName>
        <fullName evidence="1">Acetylglutamate kinase</fullName>
        <ecNumber evidence="1">2.7.2.8</ecNumber>
    </recommendedName>
    <alternativeName>
        <fullName evidence="1">N-acetyl-L-glutamate 5-phosphotransferase</fullName>
    </alternativeName>
    <alternativeName>
        <fullName evidence="1">NAG kinase</fullName>
        <shortName evidence="1">NAGK</shortName>
    </alternativeName>
</protein>
<gene>
    <name evidence="1" type="primary">argB</name>
    <name type="ordered locus">BCA_4243</name>
</gene>